<evidence type="ECO:0000255" key="1">
    <source>
        <dbReference type="HAMAP-Rule" id="MF_00712"/>
    </source>
</evidence>
<dbReference type="EC" id="1.4.4.2" evidence="1"/>
<dbReference type="EMBL" id="CP000699">
    <property type="protein sequence ID" value="ABQ69052.1"/>
    <property type="molecule type" value="Genomic_DNA"/>
</dbReference>
<dbReference type="SMR" id="A5V9T6"/>
<dbReference type="STRING" id="392499.Swit_2696"/>
<dbReference type="PaxDb" id="392499-Swit_2696"/>
<dbReference type="KEGG" id="swi:Swit_2696"/>
<dbReference type="eggNOG" id="COG0403">
    <property type="taxonomic scope" value="Bacteria"/>
</dbReference>
<dbReference type="HOGENOM" id="CLU_004620_0_2_5"/>
<dbReference type="OrthoDB" id="9801272at2"/>
<dbReference type="Proteomes" id="UP000001989">
    <property type="component" value="Chromosome"/>
</dbReference>
<dbReference type="GO" id="GO:0004375">
    <property type="term" value="F:glycine dehydrogenase (decarboxylating) activity"/>
    <property type="evidence" value="ECO:0007669"/>
    <property type="project" value="UniProtKB-EC"/>
</dbReference>
<dbReference type="GO" id="GO:0019464">
    <property type="term" value="P:glycine decarboxylation via glycine cleavage system"/>
    <property type="evidence" value="ECO:0007669"/>
    <property type="project" value="UniProtKB-UniRule"/>
</dbReference>
<dbReference type="GO" id="GO:0009116">
    <property type="term" value="P:nucleoside metabolic process"/>
    <property type="evidence" value="ECO:0007669"/>
    <property type="project" value="InterPro"/>
</dbReference>
<dbReference type="CDD" id="cd00613">
    <property type="entry name" value="GDC-P"/>
    <property type="match status" value="1"/>
</dbReference>
<dbReference type="Gene3D" id="3.90.1150.10">
    <property type="entry name" value="Aspartate Aminotransferase, domain 1"/>
    <property type="match status" value="1"/>
</dbReference>
<dbReference type="Gene3D" id="3.40.640.10">
    <property type="entry name" value="Type I PLP-dependent aspartate aminotransferase-like (Major domain)"/>
    <property type="match status" value="1"/>
</dbReference>
<dbReference type="HAMAP" id="MF_00712">
    <property type="entry name" value="GcvPA"/>
    <property type="match status" value="1"/>
</dbReference>
<dbReference type="InterPro" id="IPR023010">
    <property type="entry name" value="GcvPA"/>
</dbReference>
<dbReference type="InterPro" id="IPR049315">
    <property type="entry name" value="GDC-P_N"/>
</dbReference>
<dbReference type="InterPro" id="IPR020581">
    <property type="entry name" value="GDC_P"/>
</dbReference>
<dbReference type="InterPro" id="IPR015424">
    <property type="entry name" value="PyrdxlP-dep_Trfase"/>
</dbReference>
<dbReference type="InterPro" id="IPR015421">
    <property type="entry name" value="PyrdxlP-dep_Trfase_major"/>
</dbReference>
<dbReference type="InterPro" id="IPR015422">
    <property type="entry name" value="PyrdxlP-dep_Trfase_small"/>
</dbReference>
<dbReference type="NCBIfam" id="NF001696">
    <property type="entry name" value="PRK00451.1"/>
    <property type="match status" value="1"/>
</dbReference>
<dbReference type="PANTHER" id="PTHR42806">
    <property type="entry name" value="GLYCINE CLEAVAGE SYSTEM P-PROTEIN"/>
    <property type="match status" value="1"/>
</dbReference>
<dbReference type="PANTHER" id="PTHR42806:SF1">
    <property type="entry name" value="GLYCINE DEHYDROGENASE (DECARBOXYLATING)"/>
    <property type="match status" value="1"/>
</dbReference>
<dbReference type="Pfam" id="PF02347">
    <property type="entry name" value="GDC-P"/>
    <property type="match status" value="1"/>
</dbReference>
<dbReference type="PIRSF" id="PIRSF006815">
    <property type="entry name" value="GcvPA"/>
    <property type="match status" value="1"/>
</dbReference>
<dbReference type="SUPFAM" id="SSF53383">
    <property type="entry name" value="PLP-dependent transferases"/>
    <property type="match status" value="1"/>
</dbReference>
<proteinExistence type="inferred from homology"/>
<feature type="chain" id="PRO_1000045678" description="Probable glycine dehydrogenase (decarboxylating) subunit 1">
    <location>
        <begin position="1"/>
        <end position="456"/>
    </location>
</feature>
<organism>
    <name type="scientific">Rhizorhabdus wittichii (strain DSM 6014 / CCUG 31198 / JCM 15750 / NBRC 105917 / EY 4224 / RW1)</name>
    <name type="common">Sphingomonas wittichii</name>
    <dbReference type="NCBI Taxonomy" id="392499"/>
    <lineage>
        <taxon>Bacteria</taxon>
        <taxon>Pseudomonadati</taxon>
        <taxon>Pseudomonadota</taxon>
        <taxon>Alphaproteobacteria</taxon>
        <taxon>Sphingomonadales</taxon>
        <taxon>Sphingomonadaceae</taxon>
        <taxon>Rhizorhabdus</taxon>
    </lineage>
</organism>
<protein>
    <recommendedName>
        <fullName evidence="1">Probable glycine dehydrogenase (decarboxylating) subunit 1</fullName>
        <ecNumber evidence="1">1.4.4.2</ecNumber>
    </recommendedName>
    <alternativeName>
        <fullName evidence="1">Glycine cleavage system P-protein subunit 1</fullName>
    </alternativeName>
    <alternativeName>
        <fullName evidence="1">Glycine decarboxylase subunit 1</fullName>
    </alternativeName>
    <alternativeName>
        <fullName evidence="1">Glycine dehydrogenase (aminomethyl-transferring) subunit 1</fullName>
    </alternativeName>
</protein>
<sequence>MRYLPLTDADRSAMLARIGAASIDDLFVDVPEAARLAGPIAGLPAHASELAVERHMSRLARRNLSAGEAPFFLGCGAYRHHVPASVDHLIQRGEFLTSYTPYQPEIAQGTLQALFEFQTQVARLFGCDVANASMYDGSTACWEAITMARRVTKRDKAILSAGLHPHYVSLAKTMARFTGDRLDAAIPDLTPGAPGDDMARLLAAIDGETSCVVVQNPNILGHVADLSELAARCHEKGALLVAVVTEPVALGAIRSPGEMGADIVVGEGQSIGVGLNFGGPYVGLFACAEKHVRQMPGRLAGVTADADGQRGFVLTLSTREQHIRREKATSNICTNAGLCALAFSVHLTLLGETGLRRLAELNHAGAVAAAERLAQVPGVELVNGAFFNEFTLKLPREARPVVRSLADKGILGGVSLGRLYPGEAALAGGLVVAVTETASAEDVETLAQALEAEIAA</sequence>
<reference key="1">
    <citation type="journal article" date="2010" name="J. Bacteriol.">
        <title>Genome sequence of the dioxin-mineralizing bacterium Sphingomonas wittichii RW1.</title>
        <authorList>
            <person name="Miller T.R."/>
            <person name="Delcher A.L."/>
            <person name="Salzberg S.L."/>
            <person name="Saunders E."/>
            <person name="Detter J.C."/>
            <person name="Halden R.U."/>
        </authorList>
    </citation>
    <scope>NUCLEOTIDE SEQUENCE [LARGE SCALE GENOMIC DNA]</scope>
    <source>
        <strain>DSM 6014 / CCUG 31198 / JCM 15750 / NBRC 105917 / EY 4224 / RW1</strain>
    </source>
</reference>
<accession>A5V9T6</accession>
<comment type="function">
    <text evidence="1">The glycine cleavage system catalyzes the degradation of glycine. The P protein binds the alpha-amino group of glycine through its pyridoxal phosphate cofactor; CO(2) is released and the remaining methylamine moiety is then transferred to the lipoamide cofactor of the H protein.</text>
</comment>
<comment type="catalytic activity">
    <reaction evidence="1">
        <text>N(6)-[(R)-lipoyl]-L-lysyl-[glycine-cleavage complex H protein] + glycine + H(+) = N(6)-[(R)-S(8)-aminomethyldihydrolipoyl]-L-lysyl-[glycine-cleavage complex H protein] + CO2</text>
        <dbReference type="Rhea" id="RHEA:24304"/>
        <dbReference type="Rhea" id="RHEA-COMP:10494"/>
        <dbReference type="Rhea" id="RHEA-COMP:10495"/>
        <dbReference type="ChEBI" id="CHEBI:15378"/>
        <dbReference type="ChEBI" id="CHEBI:16526"/>
        <dbReference type="ChEBI" id="CHEBI:57305"/>
        <dbReference type="ChEBI" id="CHEBI:83099"/>
        <dbReference type="ChEBI" id="CHEBI:83143"/>
        <dbReference type="EC" id="1.4.4.2"/>
    </reaction>
</comment>
<comment type="subunit">
    <text evidence="1">The glycine cleavage system is composed of four proteins: P, T, L and H. In this organism, the P 'protein' is a heterodimer of two subunits.</text>
</comment>
<comment type="similarity">
    <text evidence="1">Belongs to the GcvP family. N-terminal subunit subfamily.</text>
</comment>
<gene>
    <name evidence="1" type="primary">gcvPA</name>
    <name type="ordered locus">Swit_2696</name>
</gene>
<name>GCSPA_RHIWR</name>
<keyword id="KW-0560">Oxidoreductase</keyword>
<keyword id="KW-1185">Reference proteome</keyword>